<sequence length="692" mass="79131">MAIERITDNKFELVSKYEPAGDQGEAIAELVDNIENGEKAQILRGATGTGKTYTMSQVIARTGKPTLVMAHNKTLAGQLYSEFKEFFPNNAVEYFVSYYDYYQPEAYVPSSDTYIEKDSSVNDEIDKLRHSATSSLLERNDVIVVASVSCIYGLGSPKEYQDSVVSLRPGQEISRDQLLNDLVGIQFERNDIDFQRGCFRVRGDVVEVFPASRDEHAFRVEFFGDEIDRIREIEVLTGQVLGEVDHLAIFPATHFMTNDDRMEESIAKIEAELEEQLKVFRSEGKLLEAQRLEQRTNYDIEMLREMGYCNGVENYSRHMDGREEGEPPYTLLDFFPDDFMIMIDESHMTMGQVKGMYNGDRARKEMLCNYGFRLPSALDNRPLKREEFESHVHQIVYVSATPGDYEMEQTDTIVEQIIRPTGLLDPVVEVRPMMGQIDDLVGEIHKRAEKNERVFVTTLTKKMSEDLTAYFKEMGIKVKYMHSDIKTLERTEIIRDLRLGVFDVLVGINLLREGIDVPEVSLVAILDADKEGFLRNERGLIQTIGRAARNSEGHVILYSDMAKALDENDPVDKEILDSGYYTEYEGQKYKITRSMKHAMDETARRREIQMAYNEEHGITPQTIKKEIRDLIAITKKTDSGEIEEVDASAMTKKERKALVKKLEKEMQQAASALDFEGAAQLRDMVLELRAMD</sequence>
<feature type="chain" id="PRO_0000138398" description="UvrABC system protein B">
    <location>
        <begin position="1"/>
        <end position="692"/>
    </location>
</feature>
<feature type="domain" description="Helicase ATP-binding" evidence="1">
    <location>
        <begin position="32"/>
        <end position="418"/>
    </location>
</feature>
<feature type="domain" description="Helicase C-terminal" evidence="1">
    <location>
        <begin position="436"/>
        <end position="631"/>
    </location>
</feature>
<feature type="domain" description="UVR" evidence="1">
    <location>
        <begin position="656"/>
        <end position="691"/>
    </location>
</feature>
<feature type="short sequence motif" description="Beta-hairpin">
    <location>
        <begin position="98"/>
        <end position="121"/>
    </location>
</feature>
<feature type="binding site" evidence="1">
    <location>
        <begin position="45"/>
        <end position="52"/>
    </location>
    <ligand>
        <name>ATP</name>
        <dbReference type="ChEBI" id="CHEBI:30616"/>
    </ligand>
</feature>
<name>UVRB_LACLA</name>
<organism>
    <name type="scientific">Lactococcus lactis subsp. lactis (strain IL1403)</name>
    <name type="common">Streptococcus lactis</name>
    <dbReference type="NCBI Taxonomy" id="272623"/>
    <lineage>
        <taxon>Bacteria</taxon>
        <taxon>Bacillati</taxon>
        <taxon>Bacillota</taxon>
        <taxon>Bacilli</taxon>
        <taxon>Lactobacillales</taxon>
        <taxon>Streptococcaceae</taxon>
        <taxon>Lactococcus</taxon>
    </lineage>
</organism>
<reference key="1">
    <citation type="journal article" date="2001" name="Genome Res.">
        <title>The complete genome sequence of the lactic acid bacterium Lactococcus lactis ssp. lactis IL1403.</title>
        <authorList>
            <person name="Bolotin A."/>
            <person name="Wincker P."/>
            <person name="Mauger S."/>
            <person name="Jaillon O."/>
            <person name="Malarme K."/>
            <person name="Weissenbach J."/>
            <person name="Ehrlich S.D."/>
            <person name="Sorokin A."/>
        </authorList>
    </citation>
    <scope>NUCLEOTIDE SEQUENCE [LARGE SCALE GENOMIC DNA]</scope>
    <source>
        <strain>IL1403</strain>
    </source>
</reference>
<gene>
    <name evidence="1" type="primary">uvrB</name>
    <name type="ordered locus">LL0562</name>
    <name type="ORF">L0257</name>
</gene>
<comment type="function">
    <text evidence="1">The UvrABC repair system catalyzes the recognition and processing of DNA lesions. A damage recognition complex composed of 2 UvrA and 2 UvrB subunits scans DNA for abnormalities. Upon binding of the UvrA(2)B(2) complex to a putative damaged site, the DNA wraps around one UvrB monomer. DNA wrap is dependent on ATP binding by UvrB and probably causes local melting of the DNA helix, facilitating insertion of UvrB beta-hairpin between the DNA strands. Then UvrB probes one DNA strand for the presence of a lesion. If a lesion is found the UvrA subunits dissociate and the UvrB-DNA preincision complex is formed. This complex is subsequently bound by UvrC and the second UvrB is released. If no lesion is found, the DNA wraps around the other UvrB subunit that will check the other stand for damage.</text>
</comment>
<comment type="subunit">
    <text evidence="1">Forms a heterotetramer with UvrA during the search for lesions. Interacts with UvrC in an incision complex.</text>
</comment>
<comment type="subcellular location">
    <subcellularLocation>
        <location evidence="1">Cytoplasm</location>
    </subcellularLocation>
</comment>
<comment type="domain">
    <text evidence="1">The beta-hairpin motif is involved in DNA binding.</text>
</comment>
<comment type="similarity">
    <text evidence="1">Belongs to the UvrB family.</text>
</comment>
<proteinExistence type="inferred from homology"/>
<dbReference type="EMBL" id="AE005176">
    <property type="protein sequence ID" value="AAK04660.1"/>
    <property type="molecule type" value="Genomic_DNA"/>
</dbReference>
<dbReference type="PIR" id="B86695">
    <property type="entry name" value="B86695"/>
</dbReference>
<dbReference type="RefSeq" id="NP_266718.1">
    <property type="nucleotide sequence ID" value="NC_002662.1"/>
</dbReference>
<dbReference type="RefSeq" id="WP_003130812.1">
    <property type="nucleotide sequence ID" value="NC_002662.1"/>
</dbReference>
<dbReference type="SMR" id="Q9CI06"/>
<dbReference type="PaxDb" id="272623-L0257"/>
<dbReference type="EnsemblBacteria" id="AAK04660">
    <property type="protein sequence ID" value="AAK04660"/>
    <property type="gene ID" value="L0257"/>
</dbReference>
<dbReference type="KEGG" id="lla:L0257"/>
<dbReference type="PATRIC" id="fig|272623.7.peg.600"/>
<dbReference type="eggNOG" id="COG0556">
    <property type="taxonomic scope" value="Bacteria"/>
</dbReference>
<dbReference type="HOGENOM" id="CLU_009621_2_1_9"/>
<dbReference type="OrthoDB" id="9806651at2"/>
<dbReference type="Proteomes" id="UP000002196">
    <property type="component" value="Chromosome"/>
</dbReference>
<dbReference type="GO" id="GO:0005737">
    <property type="term" value="C:cytoplasm"/>
    <property type="evidence" value="ECO:0007669"/>
    <property type="project" value="UniProtKB-SubCell"/>
</dbReference>
<dbReference type="GO" id="GO:0009380">
    <property type="term" value="C:excinuclease repair complex"/>
    <property type="evidence" value="ECO:0007669"/>
    <property type="project" value="InterPro"/>
</dbReference>
<dbReference type="GO" id="GO:0005524">
    <property type="term" value="F:ATP binding"/>
    <property type="evidence" value="ECO:0007669"/>
    <property type="project" value="UniProtKB-UniRule"/>
</dbReference>
<dbReference type="GO" id="GO:0016887">
    <property type="term" value="F:ATP hydrolysis activity"/>
    <property type="evidence" value="ECO:0007669"/>
    <property type="project" value="InterPro"/>
</dbReference>
<dbReference type="GO" id="GO:0003677">
    <property type="term" value="F:DNA binding"/>
    <property type="evidence" value="ECO:0007669"/>
    <property type="project" value="UniProtKB-UniRule"/>
</dbReference>
<dbReference type="GO" id="GO:0009381">
    <property type="term" value="F:excinuclease ABC activity"/>
    <property type="evidence" value="ECO:0007669"/>
    <property type="project" value="UniProtKB-UniRule"/>
</dbReference>
<dbReference type="GO" id="GO:0006289">
    <property type="term" value="P:nucleotide-excision repair"/>
    <property type="evidence" value="ECO:0007669"/>
    <property type="project" value="UniProtKB-UniRule"/>
</dbReference>
<dbReference type="GO" id="GO:0009432">
    <property type="term" value="P:SOS response"/>
    <property type="evidence" value="ECO:0007669"/>
    <property type="project" value="UniProtKB-UniRule"/>
</dbReference>
<dbReference type="CDD" id="cd17916">
    <property type="entry name" value="DEXHc_UvrB"/>
    <property type="match status" value="1"/>
</dbReference>
<dbReference type="CDD" id="cd18790">
    <property type="entry name" value="SF2_C_UvrB"/>
    <property type="match status" value="1"/>
</dbReference>
<dbReference type="Gene3D" id="3.40.50.300">
    <property type="entry name" value="P-loop containing nucleotide triphosphate hydrolases"/>
    <property type="match status" value="3"/>
</dbReference>
<dbReference type="Gene3D" id="4.10.860.10">
    <property type="entry name" value="UVR domain"/>
    <property type="match status" value="1"/>
</dbReference>
<dbReference type="HAMAP" id="MF_00204">
    <property type="entry name" value="UvrB"/>
    <property type="match status" value="1"/>
</dbReference>
<dbReference type="InterPro" id="IPR006935">
    <property type="entry name" value="Helicase/UvrB_N"/>
</dbReference>
<dbReference type="InterPro" id="IPR014001">
    <property type="entry name" value="Helicase_ATP-bd"/>
</dbReference>
<dbReference type="InterPro" id="IPR001650">
    <property type="entry name" value="Helicase_C-like"/>
</dbReference>
<dbReference type="InterPro" id="IPR027417">
    <property type="entry name" value="P-loop_NTPase"/>
</dbReference>
<dbReference type="InterPro" id="IPR001943">
    <property type="entry name" value="UVR_dom"/>
</dbReference>
<dbReference type="InterPro" id="IPR036876">
    <property type="entry name" value="UVR_dom_sf"/>
</dbReference>
<dbReference type="InterPro" id="IPR004807">
    <property type="entry name" value="UvrB"/>
</dbReference>
<dbReference type="InterPro" id="IPR041471">
    <property type="entry name" value="UvrB_inter"/>
</dbReference>
<dbReference type="InterPro" id="IPR024759">
    <property type="entry name" value="UvrB_YAD/RRR_dom"/>
</dbReference>
<dbReference type="NCBIfam" id="NF003673">
    <property type="entry name" value="PRK05298.1"/>
    <property type="match status" value="1"/>
</dbReference>
<dbReference type="NCBIfam" id="TIGR00631">
    <property type="entry name" value="uvrb"/>
    <property type="match status" value="1"/>
</dbReference>
<dbReference type="PANTHER" id="PTHR24029">
    <property type="entry name" value="UVRABC SYSTEM PROTEIN B"/>
    <property type="match status" value="1"/>
</dbReference>
<dbReference type="PANTHER" id="PTHR24029:SF0">
    <property type="entry name" value="UVRABC SYSTEM PROTEIN B"/>
    <property type="match status" value="1"/>
</dbReference>
<dbReference type="Pfam" id="PF00271">
    <property type="entry name" value="Helicase_C"/>
    <property type="match status" value="1"/>
</dbReference>
<dbReference type="Pfam" id="PF04851">
    <property type="entry name" value="ResIII"/>
    <property type="match status" value="1"/>
</dbReference>
<dbReference type="Pfam" id="PF02151">
    <property type="entry name" value="UVR"/>
    <property type="match status" value="1"/>
</dbReference>
<dbReference type="Pfam" id="PF12344">
    <property type="entry name" value="UvrB"/>
    <property type="match status" value="1"/>
</dbReference>
<dbReference type="Pfam" id="PF17757">
    <property type="entry name" value="UvrB_inter"/>
    <property type="match status" value="1"/>
</dbReference>
<dbReference type="SMART" id="SM00487">
    <property type="entry name" value="DEXDc"/>
    <property type="match status" value="1"/>
</dbReference>
<dbReference type="SMART" id="SM00490">
    <property type="entry name" value="HELICc"/>
    <property type="match status" value="1"/>
</dbReference>
<dbReference type="SUPFAM" id="SSF46600">
    <property type="entry name" value="C-terminal UvrC-binding domain of UvrB"/>
    <property type="match status" value="1"/>
</dbReference>
<dbReference type="SUPFAM" id="SSF52540">
    <property type="entry name" value="P-loop containing nucleoside triphosphate hydrolases"/>
    <property type="match status" value="2"/>
</dbReference>
<dbReference type="PROSITE" id="PS51192">
    <property type="entry name" value="HELICASE_ATP_BIND_1"/>
    <property type="match status" value="1"/>
</dbReference>
<dbReference type="PROSITE" id="PS51194">
    <property type="entry name" value="HELICASE_CTER"/>
    <property type="match status" value="1"/>
</dbReference>
<dbReference type="PROSITE" id="PS50151">
    <property type="entry name" value="UVR"/>
    <property type="match status" value="1"/>
</dbReference>
<protein>
    <recommendedName>
        <fullName evidence="1">UvrABC system protein B</fullName>
        <shortName evidence="1">Protein UvrB</shortName>
    </recommendedName>
    <alternativeName>
        <fullName evidence="1">Excinuclease ABC subunit B</fullName>
    </alternativeName>
</protein>
<keyword id="KW-0067">ATP-binding</keyword>
<keyword id="KW-0963">Cytoplasm</keyword>
<keyword id="KW-0227">DNA damage</keyword>
<keyword id="KW-0228">DNA excision</keyword>
<keyword id="KW-0234">DNA repair</keyword>
<keyword id="KW-0267">Excision nuclease</keyword>
<keyword id="KW-0547">Nucleotide-binding</keyword>
<keyword id="KW-1185">Reference proteome</keyword>
<keyword id="KW-0742">SOS response</keyword>
<accession>Q9CI06</accession>
<evidence type="ECO:0000255" key="1">
    <source>
        <dbReference type="HAMAP-Rule" id="MF_00204"/>
    </source>
</evidence>